<organism>
    <name type="scientific">Bombyx mori</name>
    <name type="common">Silk moth</name>
    <dbReference type="NCBI Taxonomy" id="7091"/>
    <lineage>
        <taxon>Eukaryota</taxon>
        <taxon>Metazoa</taxon>
        <taxon>Ecdysozoa</taxon>
        <taxon>Arthropoda</taxon>
        <taxon>Hexapoda</taxon>
        <taxon>Insecta</taxon>
        <taxon>Pterygota</taxon>
        <taxon>Neoptera</taxon>
        <taxon>Endopterygota</taxon>
        <taxon>Lepidoptera</taxon>
        <taxon>Glossata</taxon>
        <taxon>Ditrysia</taxon>
        <taxon>Bombycoidea</taxon>
        <taxon>Bombycidae</taxon>
        <taxon>Bombycinae</taxon>
        <taxon>Bombyx</taxon>
    </lineage>
</organism>
<proteinExistence type="evidence at protein level"/>
<name>BXA6_BOMMO</name>
<comment type="function">
    <text>Brain peptide responsible for activation of prothoracic glands to produce ecdysone in insects.</text>
</comment>
<comment type="subunit">
    <text>Heterodimer of a B chain and an A chain linked by two disulfide bonds.</text>
</comment>
<comment type="subcellular location">
    <subcellularLocation>
        <location>Secreted</location>
    </subcellularLocation>
</comment>
<comment type="miscellaneous">
    <text>Silk worm has two kinds of PTTH: 4K-PTTH and 22K-PTTH; there are many forms of 4K-PTTH.</text>
</comment>
<comment type="similarity">
    <text evidence="2">Belongs to the insulin family.</text>
</comment>
<dbReference type="EMBL" id="D00771">
    <property type="protein sequence ID" value="BAA00667.1"/>
    <property type="molecule type" value="Genomic_DNA"/>
</dbReference>
<dbReference type="PIR" id="S69478">
    <property type="entry name" value="S69478"/>
</dbReference>
<dbReference type="PDB" id="1BOM">
    <property type="method" value="NMR"/>
    <property type="chains" value="B=21-47"/>
</dbReference>
<dbReference type="PDB" id="1BON">
    <property type="method" value="NMR"/>
    <property type="chains" value="B=21-47"/>
</dbReference>
<dbReference type="PDBsum" id="1BOM"/>
<dbReference type="PDBsum" id="1BON"/>
<dbReference type="SMR" id="P26729"/>
<dbReference type="FunCoup" id="P26729">
    <property type="interactions" value="162"/>
</dbReference>
<dbReference type="STRING" id="7091.P26729"/>
<dbReference type="EnsemblMetazoa" id="XM_038014050.1">
    <property type="protein sequence ID" value="XP_037869978.1"/>
    <property type="gene ID" value="LOC119629137"/>
</dbReference>
<dbReference type="eggNOG" id="ENOG502SESX">
    <property type="taxonomic scope" value="Eukaryota"/>
</dbReference>
<dbReference type="HOGENOM" id="CLU_125164_2_0_1"/>
<dbReference type="InParanoid" id="P26729"/>
<dbReference type="EvolutionaryTrace" id="P26729"/>
<dbReference type="Proteomes" id="UP000005204">
    <property type="component" value="Unassembled WGS sequence"/>
</dbReference>
<dbReference type="GO" id="GO:0005615">
    <property type="term" value="C:extracellular space"/>
    <property type="evidence" value="ECO:0007669"/>
    <property type="project" value="InterPro"/>
</dbReference>
<dbReference type="GO" id="GO:0008083">
    <property type="term" value="F:growth factor activity"/>
    <property type="evidence" value="ECO:0007669"/>
    <property type="project" value="InterPro"/>
</dbReference>
<dbReference type="GO" id="GO:0005179">
    <property type="term" value="F:hormone activity"/>
    <property type="evidence" value="ECO:0007669"/>
    <property type="project" value="UniProtKB-KW"/>
</dbReference>
<dbReference type="CDD" id="cd04366">
    <property type="entry name" value="IlGF_insulin_bombyxin_like"/>
    <property type="match status" value="1"/>
</dbReference>
<dbReference type="Gene3D" id="1.10.100.10">
    <property type="entry name" value="Insulin-like"/>
    <property type="match status" value="1"/>
</dbReference>
<dbReference type="InterPro" id="IPR017097">
    <property type="entry name" value="Bombyxin"/>
</dbReference>
<dbReference type="InterPro" id="IPR030680">
    <property type="entry name" value="Bombyxin_A"/>
</dbReference>
<dbReference type="InterPro" id="IPR016179">
    <property type="entry name" value="Insulin-like"/>
</dbReference>
<dbReference type="InterPro" id="IPR036438">
    <property type="entry name" value="Insulin-like_sf"/>
</dbReference>
<dbReference type="InterPro" id="IPR022353">
    <property type="entry name" value="Insulin_CS"/>
</dbReference>
<dbReference type="InterPro" id="IPR022352">
    <property type="entry name" value="Insulin_family"/>
</dbReference>
<dbReference type="PANTHER" id="PTHR13647:SF4">
    <property type="entry name" value="INSULIN-LIKE PEPTIDE 1-RELATED"/>
    <property type="match status" value="1"/>
</dbReference>
<dbReference type="PANTHER" id="PTHR13647">
    <property type="entry name" value="INSULIN-LIKE PEPTIDE 2-RELATED"/>
    <property type="match status" value="1"/>
</dbReference>
<dbReference type="Pfam" id="PF00049">
    <property type="entry name" value="Insulin"/>
    <property type="match status" value="1"/>
</dbReference>
<dbReference type="PIRSF" id="PIRSF037038">
    <property type="entry name" value="Bombyxin"/>
    <property type="match status" value="1"/>
</dbReference>
<dbReference type="PIRSF" id="PIRSF500312">
    <property type="entry name" value="Bombyxin_A"/>
    <property type="match status" value="1"/>
</dbReference>
<dbReference type="PRINTS" id="PR02003">
    <property type="entry name" value="BOMBYXIN"/>
</dbReference>
<dbReference type="PRINTS" id="PR00276">
    <property type="entry name" value="INSULINFAMLY"/>
</dbReference>
<dbReference type="SMART" id="SM00078">
    <property type="entry name" value="IlGF"/>
    <property type="match status" value="1"/>
</dbReference>
<dbReference type="SUPFAM" id="SSF56994">
    <property type="entry name" value="Insulin-like"/>
    <property type="match status" value="1"/>
</dbReference>
<dbReference type="PROSITE" id="PS00262">
    <property type="entry name" value="INSULIN"/>
    <property type="match status" value="1"/>
</dbReference>
<sequence>MKILLAIALMLSTVMWVSTQQPQAVHTYCGRHLARTLADLCWEAGVDKRSGAQFASYGSAWLMPYSEGRGKRGIVDECCLRPCSVDVLLSYC</sequence>
<keyword id="KW-0002">3D-structure</keyword>
<keyword id="KW-0165">Cleavage on pair of basic residues</keyword>
<keyword id="KW-0903">Direct protein sequencing</keyword>
<keyword id="KW-1015">Disulfide bond</keyword>
<keyword id="KW-0372">Hormone</keyword>
<keyword id="KW-0873">Pyrrolidone carboxylic acid</keyword>
<keyword id="KW-1185">Reference proteome</keyword>
<keyword id="KW-0964">Secreted</keyword>
<keyword id="KW-0732">Signal</keyword>
<gene>
    <name type="primary">BBXA6</name>
</gene>
<reference key="1">
    <citation type="journal article" date="1996" name="J. Mol. Biol.">
        <title>Multiple gene copies for bombyxin, an insulin-related peptide of the silkmoth Bombyx mori: structural signs for gene rearrangement and duplication responsible for generation of multiple molecular forms of bombyxin.</title>
        <authorList>
            <person name="Kondo H."/>
            <person name="Ino M."/>
            <person name="Suzuki A."/>
            <person name="Ishizaki H."/>
            <person name="Iwami M."/>
        </authorList>
    </citation>
    <scope>NUCLEOTIDE SEQUENCE [GENOMIC DNA]</scope>
</reference>
<reference key="2">
    <citation type="journal article" date="1986" name="Proc. Natl. Acad. Sci. U.S.A.">
        <title>Amino acid sequence of a prothoracicotropic hormone of the silkworm Bombyx mori.</title>
        <authorList>
            <person name="Nagasawa H."/>
            <person name="Kataoka H."/>
            <person name="Isogai A."/>
            <person name="Tamura S."/>
            <person name="Suzuki A."/>
            <person name="Mizoguchi A."/>
            <person name="Fujiwara Y."/>
            <person name="Suzuki A."/>
            <person name="Takahashi S.Y."/>
            <person name="Ishizaki H."/>
        </authorList>
    </citation>
    <scope>PROTEIN SEQUENCE OF 20-47 AND 73-92</scope>
    <scope>PYROGLUTAMATE FORMATION AT GLN-20</scope>
</reference>
<reference key="3">
    <citation type="journal article" date="1995" name="J. Mol. Biol.">
        <title>Three-dimensional solution structure of bombyxin-II an insulin-like peptide of the silkmoth Bombyx mori: structural comparison with insulin and relaxin.</title>
        <authorList>
            <person name="Nagata K."/>
            <person name="Hatanaka H."/>
            <person name="Kohda D."/>
            <person name="Kataoka H."/>
            <person name="Nagasawa H."/>
            <person name="Isogai A."/>
            <person name="Ishizaki H."/>
            <person name="Suzuki A."/>
            <person name="Inagaki F."/>
        </authorList>
    </citation>
    <scope>STRUCTURE BY NMR</scope>
</reference>
<accession>P26729</accession>
<accession>P07230</accession>
<feature type="signal peptide" evidence="1">
    <location>
        <begin position="1"/>
        <end position="19"/>
    </location>
</feature>
<feature type="peptide" id="PRO_0000015977" description="Bombyxin A-6 B chain">
    <location>
        <begin position="20"/>
        <end position="47"/>
    </location>
</feature>
<feature type="propeptide" id="PRO_0000015978" description="C peptide like">
    <location>
        <begin position="50"/>
        <end position="70"/>
    </location>
</feature>
<feature type="peptide" id="PRO_0000015979" description="Bombyxin A-6 A chain">
    <location>
        <begin position="73"/>
        <end position="92"/>
    </location>
</feature>
<feature type="modified residue" description="Pyrrolidone carboxylic acid" evidence="1">
    <location>
        <position position="20"/>
    </location>
</feature>
<feature type="disulfide bond" description="Interchain (between B and A chains)">
    <location>
        <begin position="29"/>
        <end position="79"/>
    </location>
</feature>
<feature type="disulfide bond" description="Interchain (between B and A chains)">
    <location>
        <begin position="41"/>
        <end position="92"/>
    </location>
</feature>
<feature type="disulfide bond">
    <location>
        <begin position="78"/>
        <end position="83"/>
    </location>
</feature>
<feature type="turn" evidence="3">
    <location>
        <begin position="32"/>
        <end position="35"/>
    </location>
</feature>
<feature type="helix" evidence="3">
    <location>
        <begin position="36"/>
        <end position="38"/>
    </location>
</feature>
<feature type="helix" evidence="3">
    <location>
        <begin position="40"/>
        <end position="43"/>
    </location>
</feature>
<protein>
    <recommendedName>
        <fullName>Bombyxin A-6</fullName>
        <shortName>BBX-A6</shortName>
    </recommendedName>
    <alternativeName>
        <fullName>4K-prothoracicotropic hormone</fullName>
        <shortName>4K-PTTH</shortName>
    </alternativeName>
    <alternativeName>
        <fullName>Bombyxin-II</fullName>
    </alternativeName>
    <component>
        <recommendedName>
            <fullName>Bombyxin A-6 B chain</fullName>
        </recommendedName>
    </component>
    <component>
        <recommendedName>
            <fullName>Bombyxin A-6 A chain</fullName>
        </recommendedName>
    </component>
</protein>
<evidence type="ECO:0000269" key="1">
    <source>
    </source>
</evidence>
<evidence type="ECO:0000305" key="2"/>
<evidence type="ECO:0007829" key="3">
    <source>
        <dbReference type="PDB" id="1BOM"/>
    </source>
</evidence>